<reference evidence="9" key="1">
    <citation type="journal article" date="2000" name="Science">
        <title>The genome sequence of Drosophila melanogaster.</title>
        <authorList>
            <person name="Adams M.D."/>
            <person name="Celniker S.E."/>
            <person name="Holt R.A."/>
            <person name="Evans C.A."/>
            <person name="Gocayne J.D."/>
            <person name="Amanatides P.G."/>
            <person name="Scherer S.E."/>
            <person name="Li P.W."/>
            <person name="Hoskins R.A."/>
            <person name="Galle R.F."/>
            <person name="George R.A."/>
            <person name="Lewis S.E."/>
            <person name="Richards S."/>
            <person name="Ashburner M."/>
            <person name="Henderson S.N."/>
            <person name="Sutton G.G."/>
            <person name="Wortman J.R."/>
            <person name="Yandell M.D."/>
            <person name="Zhang Q."/>
            <person name="Chen L.X."/>
            <person name="Brandon R.C."/>
            <person name="Rogers Y.-H.C."/>
            <person name="Blazej R.G."/>
            <person name="Champe M."/>
            <person name="Pfeiffer B.D."/>
            <person name="Wan K.H."/>
            <person name="Doyle C."/>
            <person name="Baxter E.G."/>
            <person name="Helt G."/>
            <person name="Nelson C.R."/>
            <person name="Miklos G.L.G."/>
            <person name="Abril J.F."/>
            <person name="Agbayani A."/>
            <person name="An H.-J."/>
            <person name="Andrews-Pfannkoch C."/>
            <person name="Baldwin D."/>
            <person name="Ballew R.M."/>
            <person name="Basu A."/>
            <person name="Baxendale J."/>
            <person name="Bayraktaroglu L."/>
            <person name="Beasley E.M."/>
            <person name="Beeson K.Y."/>
            <person name="Benos P.V."/>
            <person name="Berman B.P."/>
            <person name="Bhandari D."/>
            <person name="Bolshakov S."/>
            <person name="Borkova D."/>
            <person name="Botchan M.R."/>
            <person name="Bouck J."/>
            <person name="Brokstein P."/>
            <person name="Brottier P."/>
            <person name="Burtis K.C."/>
            <person name="Busam D.A."/>
            <person name="Butler H."/>
            <person name="Cadieu E."/>
            <person name="Center A."/>
            <person name="Chandra I."/>
            <person name="Cherry J.M."/>
            <person name="Cawley S."/>
            <person name="Dahlke C."/>
            <person name="Davenport L.B."/>
            <person name="Davies P."/>
            <person name="de Pablos B."/>
            <person name="Delcher A."/>
            <person name="Deng Z."/>
            <person name="Mays A.D."/>
            <person name="Dew I."/>
            <person name="Dietz S.M."/>
            <person name="Dodson K."/>
            <person name="Doup L.E."/>
            <person name="Downes M."/>
            <person name="Dugan-Rocha S."/>
            <person name="Dunkov B.C."/>
            <person name="Dunn P."/>
            <person name="Durbin K.J."/>
            <person name="Evangelista C.C."/>
            <person name="Ferraz C."/>
            <person name="Ferriera S."/>
            <person name="Fleischmann W."/>
            <person name="Fosler C."/>
            <person name="Gabrielian A.E."/>
            <person name="Garg N.S."/>
            <person name="Gelbart W.M."/>
            <person name="Glasser K."/>
            <person name="Glodek A."/>
            <person name="Gong F."/>
            <person name="Gorrell J.H."/>
            <person name="Gu Z."/>
            <person name="Guan P."/>
            <person name="Harris M."/>
            <person name="Harris N.L."/>
            <person name="Harvey D.A."/>
            <person name="Heiman T.J."/>
            <person name="Hernandez J.R."/>
            <person name="Houck J."/>
            <person name="Hostin D."/>
            <person name="Houston K.A."/>
            <person name="Howland T.J."/>
            <person name="Wei M.-H."/>
            <person name="Ibegwam C."/>
            <person name="Jalali M."/>
            <person name="Kalush F."/>
            <person name="Karpen G.H."/>
            <person name="Ke Z."/>
            <person name="Kennison J.A."/>
            <person name="Ketchum K.A."/>
            <person name="Kimmel B.E."/>
            <person name="Kodira C.D."/>
            <person name="Kraft C.L."/>
            <person name="Kravitz S."/>
            <person name="Kulp D."/>
            <person name="Lai Z."/>
            <person name="Lasko P."/>
            <person name="Lei Y."/>
            <person name="Levitsky A.A."/>
            <person name="Li J.H."/>
            <person name="Li Z."/>
            <person name="Liang Y."/>
            <person name="Lin X."/>
            <person name="Liu X."/>
            <person name="Mattei B."/>
            <person name="McIntosh T.C."/>
            <person name="McLeod M.P."/>
            <person name="McPherson D."/>
            <person name="Merkulov G."/>
            <person name="Milshina N.V."/>
            <person name="Mobarry C."/>
            <person name="Morris J."/>
            <person name="Moshrefi A."/>
            <person name="Mount S.M."/>
            <person name="Moy M."/>
            <person name="Murphy B."/>
            <person name="Murphy L."/>
            <person name="Muzny D.M."/>
            <person name="Nelson D.L."/>
            <person name="Nelson D.R."/>
            <person name="Nelson K.A."/>
            <person name="Nixon K."/>
            <person name="Nusskern D.R."/>
            <person name="Pacleb J.M."/>
            <person name="Palazzolo M."/>
            <person name="Pittman G.S."/>
            <person name="Pan S."/>
            <person name="Pollard J."/>
            <person name="Puri V."/>
            <person name="Reese M.G."/>
            <person name="Reinert K."/>
            <person name="Remington K."/>
            <person name="Saunders R.D.C."/>
            <person name="Scheeler F."/>
            <person name="Shen H."/>
            <person name="Shue B.C."/>
            <person name="Siden-Kiamos I."/>
            <person name="Simpson M."/>
            <person name="Skupski M.P."/>
            <person name="Smith T.J."/>
            <person name="Spier E."/>
            <person name="Spradling A.C."/>
            <person name="Stapleton M."/>
            <person name="Strong R."/>
            <person name="Sun E."/>
            <person name="Svirskas R."/>
            <person name="Tector C."/>
            <person name="Turner R."/>
            <person name="Venter E."/>
            <person name="Wang A.H."/>
            <person name="Wang X."/>
            <person name="Wang Z.-Y."/>
            <person name="Wassarman D.A."/>
            <person name="Weinstock G.M."/>
            <person name="Weissenbach J."/>
            <person name="Williams S.M."/>
            <person name="Woodage T."/>
            <person name="Worley K.C."/>
            <person name="Wu D."/>
            <person name="Yang S."/>
            <person name="Yao Q.A."/>
            <person name="Ye J."/>
            <person name="Yeh R.-F."/>
            <person name="Zaveri J.S."/>
            <person name="Zhan M."/>
            <person name="Zhang G."/>
            <person name="Zhao Q."/>
            <person name="Zheng L."/>
            <person name="Zheng X.H."/>
            <person name="Zhong F.N."/>
            <person name="Zhong W."/>
            <person name="Zhou X."/>
            <person name="Zhu S.C."/>
            <person name="Zhu X."/>
            <person name="Smith H.O."/>
            <person name="Gibbs R.A."/>
            <person name="Myers E.W."/>
            <person name="Rubin G.M."/>
            <person name="Venter J.C."/>
        </authorList>
    </citation>
    <scope>NUCLEOTIDE SEQUENCE [LARGE SCALE GENOMIC DNA]</scope>
    <source>
        <strain>Berkeley</strain>
    </source>
</reference>
<reference evidence="9" key="2">
    <citation type="journal article" date="2002" name="Genome Biol.">
        <title>Annotation of the Drosophila melanogaster euchromatic genome: a systematic review.</title>
        <authorList>
            <person name="Misra S."/>
            <person name="Crosby M.A."/>
            <person name="Mungall C.J."/>
            <person name="Matthews B.B."/>
            <person name="Campbell K.S."/>
            <person name="Hradecky P."/>
            <person name="Huang Y."/>
            <person name="Kaminker J.S."/>
            <person name="Millburn G.H."/>
            <person name="Prochnik S.E."/>
            <person name="Smith C.D."/>
            <person name="Tupy J.L."/>
            <person name="Whitfield E.J."/>
            <person name="Bayraktaroglu L."/>
            <person name="Berman B.P."/>
            <person name="Bettencourt B.R."/>
            <person name="Celniker S.E."/>
            <person name="de Grey A.D.N.J."/>
            <person name="Drysdale R.A."/>
            <person name="Harris N.L."/>
            <person name="Richter J."/>
            <person name="Russo S."/>
            <person name="Schroeder A.J."/>
            <person name="Shu S.Q."/>
            <person name="Stapleton M."/>
            <person name="Yamada C."/>
            <person name="Ashburner M."/>
            <person name="Gelbart W.M."/>
            <person name="Rubin G.M."/>
            <person name="Lewis S.E."/>
        </authorList>
    </citation>
    <scope>GENOME REANNOTATION</scope>
    <source>
        <strain>Berkeley</strain>
    </source>
</reference>
<reference evidence="10" key="3">
    <citation type="submission" date="2003-04" db="EMBL/GenBank/DDBJ databases">
        <authorList>
            <person name="Stapleton M."/>
            <person name="Brokstein P."/>
            <person name="Hong L."/>
            <person name="Agbayani A."/>
            <person name="Carlson J."/>
            <person name="Champe M."/>
            <person name="Chavez C."/>
            <person name="Dorsett V."/>
            <person name="Dresnek D."/>
            <person name="Farfan D."/>
            <person name="Frise E."/>
            <person name="George R."/>
            <person name="Gonzalez M."/>
            <person name="Guarin H."/>
            <person name="Kronmiller B."/>
            <person name="Li P."/>
            <person name="Liao G."/>
            <person name="Miranda A."/>
            <person name="Mungall C.J."/>
            <person name="Nunoo J."/>
            <person name="Pacleb J."/>
            <person name="Paragas V."/>
            <person name="Park S."/>
            <person name="Patel S."/>
            <person name="Phouanenavong S."/>
            <person name="Wan K."/>
            <person name="Yu C."/>
            <person name="Lewis S.E."/>
            <person name="Rubin G.M."/>
            <person name="Celniker S."/>
        </authorList>
    </citation>
    <scope>NUCLEOTIDE SEQUENCE [LARGE SCALE MRNA]</scope>
    <source>
        <strain>Berkeley</strain>
        <tissue>Head</tissue>
    </source>
</reference>
<reference evidence="8" key="4">
    <citation type="journal article" date="2011" name="EMBO J.">
        <title>Drosophila Set1 is the major histone H3 lysine 4 trimethyltransferase with role in transcription.</title>
        <authorList>
            <person name="Ardehali M.B."/>
            <person name="Mei A."/>
            <person name="Zobeck K.L."/>
            <person name="Caron M."/>
            <person name="Lis J.T."/>
            <person name="Kusch T."/>
        </authorList>
    </citation>
    <scope>FUNCTION</scope>
    <scope>IDENTIFICATION IN THE SET1 COMPLEX</scope>
    <scope>SUBCELLULAR LOCATION</scope>
</reference>
<reference evidence="8" key="5">
    <citation type="journal article" date="2011" name="Mol. Cell. Biol.">
        <title>The COMPASS family of H3K4 methylases in Drosophila.</title>
        <authorList>
            <person name="Mohan M."/>
            <person name="Herz H.M."/>
            <person name="Smith E.R."/>
            <person name="Zhang Y."/>
            <person name="Jackson J."/>
            <person name="Washburn M.P."/>
            <person name="Florens L."/>
            <person name="Eissenberg J.C."/>
            <person name="Shilatifard A."/>
        </authorList>
    </citation>
    <scope>FUNCTION</scope>
    <scope>IDENTIFICATION IN THE SET1 COMPLEX</scope>
</reference>
<reference key="6">
    <citation type="journal article" date="2013" name="Nat. Struct. Mol. Biol.">
        <title>Chromatin proteins captured by ChIP-mass spectrometry are linked to dosage compensation in Drosophila.</title>
        <authorList>
            <person name="Wang C.I."/>
            <person name="Alekseyenko A.A."/>
            <person name="LeRoy G."/>
            <person name="Elia A.E."/>
            <person name="Gorchakov A.A."/>
            <person name="Britton L.M."/>
            <person name="Elledge S.J."/>
            <person name="Kharchenko P.V."/>
            <person name="Garcia B.A."/>
            <person name="Kuroda M.I."/>
        </authorList>
    </citation>
    <scope>INTERACTION WITH MSL COMPLEX</scope>
</reference>
<reference key="7">
    <citation type="journal article" date="2016" name="RNA">
        <title>Suppressor of sable [Su(s)] and Wdr82 down-regulate RNA from heat-shock-inducible repetitive elements by a mechanism that involves transcription termination.</title>
        <authorList>
            <person name="Brewer-Jensen P."/>
            <person name="Wilson C.B."/>
            <person name="Abernethy J."/>
            <person name="Mollison L."/>
            <person name="Card S."/>
            <person name="Searles L.L."/>
        </authorList>
    </citation>
    <scope>FUNCTION</scope>
    <scope>INTERACTION WITH SU(SABLE)</scope>
</reference>
<comment type="function">
    <text evidence="3 4 6">Component of the SET1 complex that specifically di- and trimethylates 'Lys-4' of histone H3 (PubMed:21694722, PubMed:21875999). Together with su(sable), part of a transcription termination checkpoint that promotes transcription termination of aberrant RNAs and their subsequent degradation by the nuclear exosome (PubMed:26577379).</text>
</comment>
<comment type="subunit">
    <text evidence="3 4 5 6">Component of the SET1 complex, composed at least of the catalytic subunit Set1, wds/WDR5, Wdr82, Rbbp5, ash2, Cfp1/CXXC1, hcf and Dpy-30L1 (PubMed:21694722, PubMed:21875999). Interacts with male-specific lethal (MSL) histone acetyltransferase complex at least composed of mof, msl-1, msl-2 and msl-3 (PubMed:23295261). Interacts with su(sable) (PubMed:26577379).</text>
</comment>
<comment type="subcellular location">
    <subcellularLocation>
        <location evidence="3">Nucleus</location>
    </subcellularLocation>
</comment>
<comment type="similarity">
    <text evidence="2">Belongs to the WD repeat SWD2 family.</text>
</comment>
<protein>
    <recommendedName>
        <fullName evidence="1">WD repeat-containing protein 82</fullName>
    </recommendedName>
</protein>
<evidence type="ECO:0000250" key="1">
    <source>
        <dbReference type="UniProtKB" id="Q6UXN9"/>
    </source>
</evidence>
<evidence type="ECO:0000255" key="2"/>
<evidence type="ECO:0000269" key="3">
    <source>
    </source>
</evidence>
<evidence type="ECO:0000269" key="4">
    <source>
    </source>
</evidence>
<evidence type="ECO:0000269" key="5">
    <source>
    </source>
</evidence>
<evidence type="ECO:0000269" key="6">
    <source>
    </source>
</evidence>
<evidence type="ECO:0000303" key="7">
    <source>
    </source>
</evidence>
<evidence type="ECO:0000305" key="8"/>
<evidence type="ECO:0000312" key="9">
    <source>
        <dbReference type="EMBL" id="AAF52654.1"/>
    </source>
</evidence>
<evidence type="ECO:0000312" key="10">
    <source>
        <dbReference type="EMBL" id="AAL39226.1"/>
    </source>
</evidence>
<evidence type="ECO:0000312" key="11">
    <source>
        <dbReference type="FlyBase" id="FBgn0032030"/>
    </source>
</evidence>
<feature type="chain" id="PRO_0000429380" description="WD repeat-containing protein 82">
    <location>
        <begin position="1"/>
        <end position="317"/>
    </location>
</feature>
<feature type="repeat" description="WD 1" evidence="2">
    <location>
        <begin position="21"/>
        <end position="60"/>
    </location>
</feature>
<feature type="repeat" description="WD 2" evidence="2">
    <location>
        <begin position="107"/>
        <end position="146"/>
    </location>
</feature>
<feature type="repeat" description="WD 3" evidence="2">
    <location>
        <begin position="148"/>
        <end position="186"/>
    </location>
</feature>
<feature type="repeat" description="WD 4" evidence="2">
    <location>
        <begin position="194"/>
        <end position="233"/>
    </location>
</feature>
<feature type="repeat" description="WD 5" evidence="2">
    <location>
        <begin position="238"/>
        <end position="278"/>
    </location>
</feature>
<feature type="repeat" description="WD 6" evidence="2">
    <location>
        <begin position="282"/>
        <end position="317"/>
    </location>
</feature>
<organism>
    <name type="scientific">Drosophila melanogaster</name>
    <name type="common">Fruit fly</name>
    <dbReference type="NCBI Taxonomy" id="7227"/>
    <lineage>
        <taxon>Eukaryota</taxon>
        <taxon>Metazoa</taxon>
        <taxon>Ecdysozoa</taxon>
        <taxon>Arthropoda</taxon>
        <taxon>Hexapoda</taxon>
        <taxon>Insecta</taxon>
        <taxon>Pterygota</taxon>
        <taxon>Neoptera</taxon>
        <taxon>Endopterygota</taxon>
        <taxon>Diptera</taxon>
        <taxon>Brachycera</taxon>
        <taxon>Muscomorpha</taxon>
        <taxon>Ephydroidea</taxon>
        <taxon>Drosophilidae</taxon>
        <taxon>Drosophila</taxon>
        <taxon>Sophophora</taxon>
    </lineage>
</organism>
<accession>Q9VLN1</accession>
<gene>
    <name evidence="7 11" type="primary">Wdr82</name>
    <name type="ORF">CG17293</name>
</gene>
<sequence>MKIKLIDSVVRSFKVAKIFRENTDKINAIDFAPNGEHLISCSEDDQIVIYDCEKGTQSRTVNSKKYGVDLIHFTHANNTAIHSSTKVDDTIRYLSLHDNKYLRYFPGHTKKVISLCISPVEDTFLSGSLDKTLRLWDLRSPNCQGLMHLSGRPIAAYDPEGLIFAAGVNSESIKLYDLRSFDKGPFVTFKLNQEKECDWTGLKFSRDGKTILISTNGSVIRLVDAFHGTPLQTFTGYPNNKGIPIEASFSPDSQFIFSGSTDGRVHIWNADTGNKVSVLNGDHPGPVQCVQFNPKYMMLASACTNMAFWLPTSEEGL</sequence>
<dbReference type="EMBL" id="AE014134">
    <property type="protein sequence ID" value="AAF52654.1"/>
    <property type="molecule type" value="Genomic_DNA"/>
</dbReference>
<dbReference type="EMBL" id="AY069081">
    <property type="protein sequence ID" value="AAL39226.1"/>
    <property type="molecule type" value="mRNA"/>
</dbReference>
<dbReference type="RefSeq" id="NP_609217.1">
    <property type="nucleotide sequence ID" value="NM_135373.3"/>
</dbReference>
<dbReference type="SMR" id="Q9VLN1"/>
<dbReference type="BioGRID" id="60277">
    <property type="interactions" value="28"/>
</dbReference>
<dbReference type="ComplexPortal" id="CPX-2798">
    <property type="entry name" value="COMPASS complex"/>
</dbReference>
<dbReference type="FunCoup" id="Q9VLN1">
    <property type="interactions" value="2552"/>
</dbReference>
<dbReference type="IntAct" id="Q9VLN1">
    <property type="interactions" value="22"/>
</dbReference>
<dbReference type="STRING" id="7227.FBpp0079266"/>
<dbReference type="PaxDb" id="7227-FBpp0079266"/>
<dbReference type="DNASU" id="34153"/>
<dbReference type="EnsemblMetazoa" id="FBtr0079650">
    <property type="protein sequence ID" value="FBpp0079266"/>
    <property type="gene ID" value="FBgn0032030"/>
</dbReference>
<dbReference type="GeneID" id="34153"/>
<dbReference type="KEGG" id="dme:Dmel_CG17293"/>
<dbReference type="UCSC" id="CG17293-RA">
    <property type="organism name" value="d. melanogaster"/>
</dbReference>
<dbReference type="AGR" id="FB:FBgn0032030"/>
<dbReference type="CTD" id="80335"/>
<dbReference type="FlyBase" id="FBgn0032030">
    <property type="gene designation" value="Wdr82"/>
</dbReference>
<dbReference type="VEuPathDB" id="VectorBase:FBgn0032030"/>
<dbReference type="eggNOG" id="KOG1446">
    <property type="taxonomic scope" value="Eukaryota"/>
</dbReference>
<dbReference type="GeneTree" id="ENSGT00530000063965"/>
<dbReference type="HOGENOM" id="CLU_044117_0_0_1"/>
<dbReference type="InParanoid" id="Q9VLN1"/>
<dbReference type="OMA" id="KICVLNG"/>
<dbReference type="OrthoDB" id="27537at2759"/>
<dbReference type="PhylomeDB" id="Q9VLN1"/>
<dbReference type="Reactome" id="R-DME-9772755">
    <property type="pathway name" value="Formation of WDR5-containing histone-modifying complexes"/>
</dbReference>
<dbReference type="BioGRID-ORCS" id="34153">
    <property type="hits" value="1 hit in 1 CRISPR screen"/>
</dbReference>
<dbReference type="GenomeRNAi" id="34153"/>
<dbReference type="PRO" id="PR:Q9VLN1"/>
<dbReference type="Proteomes" id="UP000000803">
    <property type="component" value="Chromosome 2L"/>
</dbReference>
<dbReference type="Bgee" id="FBgn0032030">
    <property type="expression patterns" value="Expressed in adult class III enteroendocrine cell in adult midgut (Drosophila) and 94 other cell types or tissues"/>
</dbReference>
<dbReference type="GO" id="GO:0035097">
    <property type="term" value="C:histone methyltransferase complex"/>
    <property type="evidence" value="ECO:0000314"/>
    <property type="project" value="FlyBase"/>
</dbReference>
<dbReference type="GO" id="GO:0048188">
    <property type="term" value="C:Set1C/COMPASS complex"/>
    <property type="evidence" value="ECO:0000314"/>
    <property type="project" value="FlyBase"/>
</dbReference>
<dbReference type="GO" id="GO:0003682">
    <property type="term" value="F:chromatin binding"/>
    <property type="evidence" value="ECO:0000318"/>
    <property type="project" value="GO_Central"/>
</dbReference>
<dbReference type="GO" id="GO:0006338">
    <property type="term" value="P:chromatin remodeling"/>
    <property type="evidence" value="ECO:0000315"/>
    <property type="project" value="FlyBase"/>
</dbReference>
<dbReference type="GO" id="GO:0006353">
    <property type="term" value="P:DNA-templated transcription termination"/>
    <property type="evidence" value="ECO:0007669"/>
    <property type="project" value="UniProtKB-KW"/>
</dbReference>
<dbReference type="GO" id="GO:0007507">
    <property type="term" value="P:heart development"/>
    <property type="evidence" value="ECO:0000315"/>
    <property type="project" value="FlyBase"/>
</dbReference>
<dbReference type="GO" id="GO:0032785">
    <property type="term" value="P:negative regulation of DNA-templated transcription, elongation"/>
    <property type="evidence" value="ECO:0000314"/>
    <property type="project" value="UniProtKB"/>
</dbReference>
<dbReference type="GO" id="GO:0071027">
    <property type="term" value="P:nuclear RNA surveillance"/>
    <property type="evidence" value="ECO:0000314"/>
    <property type="project" value="UniProtKB"/>
</dbReference>
<dbReference type="CDD" id="cd00200">
    <property type="entry name" value="WD40"/>
    <property type="match status" value="1"/>
</dbReference>
<dbReference type="FunFam" id="2.130.10.10:FF:000065">
    <property type="entry name" value="WD repeat-containing protein 82"/>
    <property type="match status" value="1"/>
</dbReference>
<dbReference type="Gene3D" id="2.130.10.10">
    <property type="entry name" value="YVTN repeat-like/Quinoprotein amine dehydrogenase"/>
    <property type="match status" value="1"/>
</dbReference>
<dbReference type="InterPro" id="IPR020472">
    <property type="entry name" value="G-protein_beta_WD-40_rep"/>
</dbReference>
<dbReference type="InterPro" id="IPR037867">
    <property type="entry name" value="Swd2/WDR82"/>
</dbReference>
<dbReference type="InterPro" id="IPR015943">
    <property type="entry name" value="WD40/YVTN_repeat-like_dom_sf"/>
</dbReference>
<dbReference type="InterPro" id="IPR019775">
    <property type="entry name" value="WD40_repeat_CS"/>
</dbReference>
<dbReference type="InterPro" id="IPR036322">
    <property type="entry name" value="WD40_repeat_dom_sf"/>
</dbReference>
<dbReference type="InterPro" id="IPR001680">
    <property type="entry name" value="WD40_rpt"/>
</dbReference>
<dbReference type="PANTHER" id="PTHR19861:SF0">
    <property type="entry name" value="WD REPEAT-CONTAINING PROTEIN 82"/>
    <property type="match status" value="1"/>
</dbReference>
<dbReference type="PANTHER" id="PTHR19861">
    <property type="entry name" value="WD40 REPEAT PROTEIN SWD2"/>
    <property type="match status" value="1"/>
</dbReference>
<dbReference type="Pfam" id="PF00400">
    <property type="entry name" value="WD40"/>
    <property type="match status" value="3"/>
</dbReference>
<dbReference type="PRINTS" id="PR00320">
    <property type="entry name" value="GPROTEINBRPT"/>
</dbReference>
<dbReference type="SMART" id="SM00320">
    <property type="entry name" value="WD40"/>
    <property type="match status" value="6"/>
</dbReference>
<dbReference type="SUPFAM" id="SSF50978">
    <property type="entry name" value="WD40 repeat-like"/>
    <property type="match status" value="1"/>
</dbReference>
<dbReference type="PROSITE" id="PS00678">
    <property type="entry name" value="WD_REPEATS_1"/>
    <property type="match status" value="1"/>
</dbReference>
<dbReference type="PROSITE" id="PS50082">
    <property type="entry name" value="WD_REPEATS_2"/>
    <property type="match status" value="3"/>
</dbReference>
<dbReference type="PROSITE" id="PS50294">
    <property type="entry name" value="WD_REPEATS_REGION"/>
    <property type="match status" value="1"/>
</dbReference>
<keyword id="KW-0539">Nucleus</keyword>
<keyword id="KW-1185">Reference proteome</keyword>
<keyword id="KW-0677">Repeat</keyword>
<keyword id="KW-0804">Transcription</keyword>
<keyword id="KW-0805">Transcription regulation</keyword>
<keyword id="KW-0806">Transcription termination</keyword>
<keyword id="KW-0853">WD repeat</keyword>
<proteinExistence type="evidence at protein level"/>
<name>WDR82_DROME</name>